<organism>
    <name type="scientific">Thermodesulfovibrio yellowstonii (strain ATCC 51303 / DSM 11347 / YP87)</name>
    <dbReference type="NCBI Taxonomy" id="289376"/>
    <lineage>
        <taxon>Bacteria</taxon>
        <taxon>Pseudomonadati</taxon>
        <taxon>Nitrospirota</taxon>
        <taxon>Thermodesulfovibrionia</taxon>
        <taxon>Thermodesulfovibrionales</taxon>
        <taxon>Thermodesulfovibrionaceae</taxon>
        <taxon>Thermodesulfovibrio</taxon>
    </lineage>
</organism>
<protein>
    <recommendedName>
        <fullName evidence="1">Endoribonuclease YbeY</fullName>
        <ecNumber evidence="1">3.1.-.-</ecNumber>
    </recommendedName>
</protein>
<comment type="function">
    <text evidence="1">Single strand-specific metallo-endoribonuclease involved in late-stage 70S ribosome quality control and in maturation of the 3' terminus of the 16S rRNA.</text>
</comment>
<comment type="cofactor">
    <cofactor evidence="1">
        <name>Zn(2+)</name>
        <dbReference type="ChEBI" id="CHEBI:29105"/>
    </cofactor>
    <text evidence="1">Binds 1 zinc ion.</text>
</comment>
<comment type="subcellular location">
    <subcellularLocation>
        <location evidence="1">Cytoplasm</location>
    </subcellularLocation>
</comment>
<comment type="similarity">
    <text evidence="1">Belongs to the endoribonuclease YbeY family.</text>
</comment>
<dbReference type="EC" id="3.1.-.-" evidence="1"/>
<dbReference type="EMBL" id="CP001147">
    <property type="protein sequence ID" value="ACI22026.1"/>
    <property type="molecule type" value="Genomic_DNA"/>
</dbReference>
<dbReference type="RefSeq" id="WP_012546720.1">
    <property type="nucleotide sequence ID" value="NC_011296.1"/>
</dbReference>
<dbReference type="RefSeq" id="YP_002248706.1">
    <property type="nucleotide sequence ID" value="NC_011296.1"/>
</dbReference>
<dbReference type="SMR" id="B5YKE1"/>
<dbReference type="FunCoup" id="B5YKE1">
    <property type="interactions" value="229"/>
</dbReference>
<dbReference type="STRING" id="289376.THEYE_A0868"/>
<dbReference type="EnsemblBacteria" id="ACI22026">
    <property type="protein sequence ID" value="ACI22026"/>
    <property type="gene ID" value="THEYE_A0868"/>
</dbReference>
<dbReference type="KEGG" id="tye:THEYE_A0868"/>
<dbReference type="PATRIC" id="fig|289376.4.peg.855"/>
<dbReference type="eggNOG" id="COG0319">
    <property type="taxonomic scope" value="Bacteria"/>
</dbReference>
<dbReference type="HOGENOM" id="CLU_106710_3_3_0"/>
<dbReference type="InParanoid" id="B5YKE1"/>
<dbReference type="OrthoDB" id="9811984at2"/>
<dbReference type="Proteomes" id="UP000000718">
    <property type="component" value="Chromosome"/>
</dbReference>
<dbReference type="GO" id="GO:0005737">
    <property type="term" value="C:cytoplasm"/>
    <property type="evidence" value="ECO:0007669"/>
    <property type="project" value="UniProtKB-SubCell"/>
</dbReference>
<dbReference type="GO" id="GO:0004222">
    <property type="term" value="F:metalloendopeptidase activity"/>
    <property type="evidence" value="ECO:0007669"/>
    <property type="project" value="InterPro"/>
</dbReference>
<dbReference type="GO" id="GO:0004521">
    <property type="term" value="F:RNA endonuclease activity"/>
    <property type="evidence" value="ECO:0007669"/>
    <property type="project" value="UniProtKB-UniRule"/>
</dbReference>
<dbReference type="GO" id="GO:0008270">
    <property type="term" value="F:zinc ion binding"/>
    <property type="evidence" value="ECO:0007669"/>
    <property type="project" value="UniProtKB-UniRule"/>
</dbReference>
<dbReference type="GO" id="GO:0006364">
    <property type="term" value="P:rRNA processing"/>
    <property type="evidence" value="ECO:0007669"/>
    <property type="project" value="UniProtKB-UniRule"/>
</dbReference>
<dbReference type="Gene3D" id="3.40.390.30">
    <property type="entry name" value="Metalloproteases ('zincins'), catalytic domain"/>
    <property type="match status" value="1"/>
</dbReference>
<dbReference type="HAMAP" id="MF_00009">
    <property type="entry name" value="Endoribonucl_YbeY"/>
    <property type="match status" value="1"/>
</dbReference>
<dbReference type="InterPro" id="IPR023091">
    <property type="entry name" value="MetalPrtase_cat_dom_sf_prd"/>
</dbReference>
<dbReference type="InterPro" id="IPR002036">
    <property type="entry name" value="YbeY"/>
</dbReference>
<dbReference type="InterPro" id="IPR020549">
    <property type="entry name" value="YbeY_CS"/>
</dbReference>
<dbReference type="NCBIfam" id="TIGR00043">
    <property type="entry name" value="rRNA maturation RNase YbeY"/>
    <property type="match status" value="1"/>
</dbReference>
<dbReference type="PANTHER" id="PTHR46986">
    <property type="entry name" value="ENDORIBONUCLEASE YBEY, CHLOROPLASTIC"/>
    <property type="match status" value="1"/>
</dbReference>
<dbReference type="PANTHER" id="PTHR46986:SF1">
    <property type="entry name" value="ENDORIBONUCLEASE YBEY, CHLOROPLASTIC"/>
    <property type="match status" value="1"/>
</dbReference>
<dbReference type="Pfam" id="PF02130">
    <property type="entry name" value="YbeY"/>
    <property type="match status" value="1"/>
</dbReference>
<dbReference type="SUPFAM" id="SSF55486">
    <property type="entry name" value="Metalloproteases ('zincins'), catalytic domain"/>
    <property type="match status" value="1"/>
</dbReference>
<dbReference type="PROSITE" id="PS01306">
    <property type="entry name" value="UPF0054"/>
    <property type="match status" value="1"/>
</dbReference>
<feature type="chain" id="PRO_1000200002" description="Endoribonuclease YbeY">
    <location>
        <begin position="1"/>
        <end position="159"/>
    </location>
</feature>
<feature type="binding site" evidence="1">
    <location>
        <position position="126"/>
    </location>
    <ligand>
        <name>Zn(2+)</name>
        <dbReference type="ChEBI" id="CHEBI:29105"/>
        <note>catalytic</note>
    </ligand>
</feature>
<feature type="binding site" evidence="1">
    <location>
        <position position="130"/>
    </location>
    <ligand>
        <name>Zn(2+)</name>
        <dbReference type="ChEBI" id="CHEBI:29105"/>
        <note>catalytic</note>
    </ligand>
</feature>
<feature type="binding site" evidence="1">
    <location>
        <position position="136"/>
    </location>
    <ligand>
        <name>Zn(2+)</name>
        <dbReference type="ChEBI" id="CHEBI:29105"/>
        <note>catalytic</note>
    </ligand>
</feature>
<reference key="1">
    <citation type="submission" date="2008-08" db="EMBL/GenBank/DDBJ databases">
        <title>The complete genome sequence of Thermodesulfovibrio yellowstonii strain ATCC 51303 / DSM 11347 / YP87.</title>
        <authorList>
            <person name="Dodson R.J."/>
            <person name="Durkin A.S."/>
            <person name="Wu M."/>
            <person name="Eisen J."/>
            <person name="Sutton G."/>
        </authorList>
    </citation>
    <scope>NUCLEOTIDE SEQUENCE [LARGE SCALE GENOMIC DNA]</scope>
    <source>
        <strain>ATCC 51303 / DSM 11347 / YP87</strain>
    </source>
</reference>
<sequence>MRISVEVINRQRKIRVASKKVISRIKKIVSFLYETKDKKLSKITVKNPAFLLISVIFVGDQKMKELNSKYRGKNSVTDILSFPYLENEPSGNLFLGEIIINPKKVFSQAKQYNKTFWQELDRILAHGILHLLGYDHEVSDSEARKMRKLEQKILSNLKP</sequence>
<accession>B5YKE1</accession>
<gene>
    <name evidence="1" type="primary">ybeY</name>
    <name type="ordered locus">THEYE_A0868</name>
</gene>
<keyword id="KW-0963">Cytoplasm</keyword>
<keyword id="KW-0255">Endonuclease</keyword>
<keyword id="KW-0378">Hydrolase</keyword>
<keyword id="KW-0479">Metal-binding</keyword>
<keyword id="KW-0540">Nuclease</keyword>
<keyword id="KW-1185">Reference proteome</keyword>
<keyword id="KW-0690">Ribosome biogenesis</keyword>
<keyword id="KW-0698">rRNA processing</keyword>
<keyword id="KW-0862">Zinc</keyword>
<evidence type="ECO:0000255" key="1">
    <source>
        <dbReference type="HAMAP-Rule" id="MF_00009"/>
    </source>
</evidence>
<proteinExistence type="inferred from homology"/>
<name>YBEY_THEYD</name>